<name>SALA_DROOR</name>
<organism>
    <name type="scientific">Drosophila orena</name>
    <name type="common">Fruit fly</name>
    <dbReference type="NCBI Taxonomy" id="7233"/>
    <lineage>
        <taxon>Eukaryota</taxon>
        <taxon>Metazoa</taxon>
        <taxon>Ecdysozoa</taxon>
        <taxon>Arthropoda</taxon>
        <taxon>Hexapoda</taxon>
        <taxon>Insecta</taxon>
        <taxon>Pterygota</taxon>
        <taxon>Neoptera</taxon>
        <taxon>Endopterygota</taxon>
        <taxon>Diptera</taxon>
        <taxon>Brachycera</taxon>
        <taxon>Muscomorpha</taxon>
        <taxon>Ephydroidea</taxon>
        <taxon>Drosophilidae</taxon>
        <taxon>Drosophila</taxon>
        <taxon>Sophophora</taxon>
    </lineage>
</organism>
<comment type="function">
    <text evidence="1">Likely to be involved in the establishment of the head.</text>
</comment>
<comment type="subcellular location">
    <subcellularLocation>
        <location evidence="1">Secreted</location>
    </subcellularLocation>
</comment>
<feature type="signal peptide" evidence="2">
    <location>
        <begin position="1"/>
        <end position="16"/>
    </location>
</feature>
<feature type="chain" id="PRO_0000022268" description="Protein spalt-accessory">
    <location>
        <begin position="17"/>
        <end position="142"/>
    </location>
</feature>
<feature type="region of interest" description="Disordered" evidence="3">
    <location>
        <begin position="65"/>
        <end position="142"/>
    </location>
</feature>
<feature type="compositionally biased region" description="Gly residues" evidence="3">
    <location>
        <begin position="65"/>
        <end position="77"/>
    </location>
</feature>
<feature type="compositionally biased region" description="Basic and acidic residues" evidence="3">
    <location>
        <begin position="112"/>
        <end position="124"/>
    </location>
</feature>
<feature type="compositionally biased region" description="Basic residues" evidence="3">
    <location>
        <begin position="125"/>
        <end position="142"/>
    </location>
</feature>
<evidence type="ECO:0000250" key="1"/>
<evidence type="ECO:0000255" key="2"/>
<evidence type="ECO:0000256" key="3">
    <source>
        <dbReference type="SAM" id="MobiDB-lite"/>
    </source>
</evidence>
<protein>
    <recommendedName>
        <fullName>Protein spalt-accessory</fullName>
    </recommendedName>
</protein>
<proteinExistence type="inferred from homology"/>
<accession>P21748</accession>
<sequence>MKLLIALFVLVNAVIAQNGYGQGGQGPYGGQGGFGGYGGLGGQAGFGGQIGFNGQGGVGGQLGVGQGGVSPGQGGFAAQGPPNQYQPGYGSPVGSGHFHGGNPVDAGYIHGNHHEYPEHHGDHHREHHEHHGHHEHHGHHRH</sequence>
<reference key="1">
    <citation type="journal article" date="1989" name="Proc. Natl. Acad. Sci. U.S.A.">
        <title>The homeotic gene spalt (sal) evolved during Drosophila speciation.</title>
        <authorList>
            <person name="Reuter D."/>
            <person name="Schuh R."/>
            <person name="Jaeckle H."/>
        </authorList>
    </citation>
    <scope>NUCLEOTIDE SEQUENCE [GENOMIC DNA]</scope>
</reference>
<dbReference type="EMBL" id="M21579">
    <property type="protein sequence ID" value="AAA28876.1"/>
    <property type="molecule type" value="Genomic_DNA"/>
</dbReference>
<dbReference type="PIR" id="C33910">
    <property type="entry name" value="C33910"/>
</dbReference>
<dbReference type="GO" id="GO:0005576">
    <property type="term" value="C:extracellular region"/>
    <property type="evidence" value="ECO:0007669"/>
    <property type="project" value="UniProtKB-SubCell"/>
</dbReference>
<gene>
    <name type="primary">sala</name>
    <name type="synonym">sal</name>
</gene>
<keyword id="KW-0217">Developmental protein</keyword>
<keyword id="KW-0964">Secreted</keyword>
<keyword id="KW-0732">Signal</keyword>